<protein>
    <recommendedName>
        <fullName evidence="1">Inner membrane-spanning protein YciB</fullName>
    </recommendedName>
</protein>
<keyword id="KW-0997">Cell inner membrane</keyword>
<keyword id="KW-1003">Cell membrane</keyword>
<keyword id="KW-0472">Membrane</keyword>
<keyword id="KW-0812">Transmembrane</keyword>
<keyword id="KW-1133">Transmembrane helix</keyword>
<dbReference type="EMBL" id="CP000472">
    <property type="protein sequence ID" value="ACJ28662.1"/>
    <property type="molecule type" value="Genomic_DNA"/>
</dbReference>
<dbReference type="RefSeq" id="WP_020912038.1">
    <property type="nucleotide sequence ID" value="NC_011566.1"/>
</dbReference>
<dbReference type="STRING" id="225849.swp_1903"/>
<dbReference type="KEGG" id="swp:swp_1903"/>
<dbReference type="eggNOG" id="COG2917">
    <property type="taxonomic scope" value="Bacteria"/>
</dbReference>
<dbReference type="HOGENOM" id="CLU_089554_2_0_6"/>
<dbReference type="OrthoDB" id="9788219at2"/>
<dbReference type="Proteomes" id="UP000000753">
    <property type="component" value="Chromosome"/>
</dbReference>
<dbReference type="GO" id="GO:0005886">
    <property type="term" value="C:plasma membrane"/>
    <property type="evidence" value="ECO:0007669"/>
    <property type="project" value="UniProtKB-SubCell"/>
</dbReference>
<dbReference type="HAMAP" id="MF_00189">
    <property type="entry name" value="YciB"/>
    <property type="match status" value="1"/>
</dbReference>
<dbReference type="InterPro" id="IPR006008">
    <property type="entry name" value="YciB"/>
</dbReference>
<dbReference type="NCBIfam" id="TIGR00997">
    <property type="entry name" value="ispZ"/>
    <property type="match status" value="1"/>
</dbReference>
<dbReference type="NCBIfam" id="NF001324">
    <property type="entry name" value="PRK00259.1-2"/>
    <property type="match status" value="1"/>
</dbReference>
<dbReference type="NCBIfam" id="NF001325">
    <property type="entry name" value="PRK00259.1-3"/>
    <property type="match status" value="1"/>
</dbReference>
<dbReference type="PANTHER" id="PTHR36917:SF1">
    <property type="entry name" value="INNER MEMBRANE-SPANNING PROTEIN YCIB"/>
    <property type="match status" value="1"/>
</dbReference>
<dbReference type="PANTHER" id="PTHR36917">
    <property type="entry name" value="INTRACELLULAR SEPTATION PROTEIN A-RELATED"/>
    <property type="match status" value="1"/>
</dbReference>
<dbReference type="Pfam" id="PF04279">
    <property type="entry name" value="IspA"/>
    <property type="match status" value="1"/>
</dbReference>
<feature type="chain" id="PRO_1000118585" description="Inner membrane-spanning protein YciB">
    <location>
        <begin position="1"/>
        <end position="181"/>
    </location>
</feature>
<feature type="transmembrane region" description="Helical" evidence="1">
    <location>
        <begin position="10"/>
        <end position="30"/>
    </location>
</feature>
<feature type="transmembrane region" description="Helical" evidence="1">
    <location>
        <begin position="50"/>
        <end position="70"/>
    </location>
</feature>
<feature type="transmembrane region" description="Helical" evidence="1">
    <location>
        <begin position="80"/>
        <end position="100"/>
    </location>
</feature>
<feature type="transmembrane region" description="Helical" evidence="1">
    <location>
        <begin position="118"/>
        <end position="138"/>
    </location>
</feature>
<feature type="transmembrane region" description="Helical" evidence="1">
    <location>
        <begin position="148"/>
        <end position="168"/>
    </location>
</feature>
<comment type="function">
    <text evidence="1">Plays a role in cell envelope biogenesis, maintenance of cell envelope integrity and membrane homeostasis.</text>
</comment>
<comment type="subcellular location">
    <subcellularLocation>
        <location evidence="1">Cell inner membrane</location>
        <topology evidence="1">Multi-pass membrane protein</topology>
    </subcellularLocation>
</comment>
<comment type="similarity">
    <text evidence="1">Belongs to the YciB family.</text>
</comment>
<name>YCIB_SHEPW</name>
<gene>
    <name evidence="1" type="primary">yciB</name>
    <name type="ordered locus">swp_1903</name>
</gene>
<organism>
    <name type="scientific">Shewanella piezotolerans (strain WP3 / JCM 13877)</name>
    <dbReference type="NCBI Taxonomy" id="225849"/>
    <lineage>
        <taxon>Bacteria</taxon>
        <taxon>Pseudomonadati</taxon>
        <taxon>Pseudomonadota</taxon>
        <taxon>Gammaproteobacteria</taxon>
        <taxon>Alteromonadales</taxon>
        <taxon>Shewanellaceae</taxon>
        <taxon>Shewanella</taxon>
    </lineage>
</organism>
<sequence>MKQLLDFLPLVIFFAVYKFFDIYIASGALIAATALQLIISYMLYKKLEKMHLITFAMVSVFGSLTLILHDDSFIKWKVTIVYALFAIALAVSQFMNKPILKSMLGKELVVEDKIWAHVTWYWVLFFVVCGLVNIYVAFSLSQETWVNFKVFGLTALTLINTVLTVFYLFKNMSEEDKKELK</sequence>
<proteinExistence type="inferred from homology"/>
<evidence type="ECO:0000255" key="1">
    <source>
        <dbReference type="HAMAP-Rule" id="MF_00189"/>
    </source>
</evidence>
<accession>B8CLL1</accession>
<reference key="1">
    <citation type="journal article" date="2008" name="PLoS ONE">
        <title>Environmental adaptation: genomic analysis of the piezotolerant and psychrotolerant deep-sea iron reducing bacterium Shewanella piezotolerans WP3.</title>
        <authorList>
            <person name="Wang F."/>
            <person name="Wang J."/>
            <person name="Jian H."/>
            <person name="Zhang B."/>
            <person name="Li S."/>
            <person name="Wang F."/>
            <person name="Zeng X."/>
            <person name="Gao L."/>
            <person name="Bartlett D.H."/>
            <person name="Yu J."/>
            <person name="Hu S."/>
            <person name="Xiao X."/>
        </authorList>
    </citation>
    <scope>NUCLEOTIDE SEQUENCE [LARGE SCALE GENOMIC DNA]</scope>
    <source>
        <strain>WP3 / JCM 13877</strain>
    </source>
</reference>